<organism>
    <name type="scientific">Escherichia coli O9:H4 (strain HS)</name>
    <dbReference type="NCBI Taxonomy" id="331112"/>
    <lineage>
        <taxon>Bacteria</taxon>
        <taxon>Pseudomonadati</taxon>
        <taxon>Pseudomonadota</taxon>
        <taxon>Gammaproteobacteria</taxon>
        <taxon>Enterobacterales</taxon>
        <taxon>Enterobacteriaceae</taxon>
        <taxon>Escherichia</taxon>
    </lineage>
</organism>
<feature type="chain" id="PRO_1000067316" description="Probable L-ascorbate-6-phosphate lactonase UlaG">
    <location>
        <begin position="1"/>
        <end position="354"/>
    </location>
</feature>
<sequence length="354" mass="40061">MSKVKSITRESWILSTFPEWGSWLNEEIEQEQVAPGTFAMWWLGCTGIWLKSEGGTNVCVDFWCGTGKQSHGNPLMKQGHQMQRMAGVKKLQPNLRTTPFVLDPFAIRQIDAVLATHDHNDHIDVNVAAAVMQNCADDVPFIGPKTCVDLWIGWGVPKERCIVVKPGDVVKVKDIEIHALDAFDRTALITLPADQKAAGVLPDGMDDRAVNYLFKTPGGSLYHSGDSHYSNYYAKHGNEHQIDVALGSYGENPRGITDKMTSADMLRMGEALNAKVVIPFHHDIWSNFQADPQEIRVLWEMKKDRLKYGFKPFIWQVGGKFTWPLDKDNFEYHYPRGFDDCFTIEPDLPFKSFL</sequence>
<gene>
    <name evidence="1" type="primary">ulaG</name>
    <name type="ordered locus">EcHS_A4436</name>
</gene>
<evidence type="ECO:0000255" key="1">
    <source>
        <dbReference type="HAMAP-Rule" id="MF_01266"/>
    </source>
</evidence>
<comment type="function">
    <text evidence="1">Probably catalyzes the hydrolysis of L-ascorbate-6-P into 3-keto-L-gulonate-6-P. Is essential for L-ascorbate utilization under anaerobic conditions.</text>
</comment>
<comment type="catalytic activity">
    <reaction evidence="1">
        <text>L-ascorbate 6-phosphate + H2O = 3-dehydro-L-gulonate 6-phosphate</text>
        <dbReference type="Rhea" id="RHEA:28803"/>
        <dbReference type="ChEBI" id="CHEBI:15377"/>
        <dbReference type="ChEBI" id="CHEBI:58774"/>
        <dbReference type="ChEBI" id="CHEBI:61698"/>
    </reaction>
</comment>
<comment type="cofactor">
    <cofactor evidence="1">
        <name>a divalent metal cation</name>
        <dbReference type="ChEBI" id="CHEBI:60240"/>
    </cofactor>
</comment>
<comment type="pathway">
    <text evidence="1">Cofactor degradation; L-ascorbate degradation; D-xylulose 5-phosphate from L-ascorbate: step 1/4.</text>
</comment>
<comment type="subcellular location">
    <subcellularLocation>
        <location evidence="1">Cytoplasm</location>
    </subcellularLocation>
</comment>
<comment type="induction">
    <text evidence="1">Induced by L-ascorbate. Repressed by UlaR.</text>
</comment>
<comment type="similarity">
    <text evidence="1">Belongs to the UlaG family.</text>
</comment>
<keyword id="KW-0963">Cytoplasm</keyword>
<keyword id="KW-0378">Hydrolase</keyword>
<accession>A8A7T8</accession>
<reference key="1">
    <citation type="journal article" date="2008" name="J. Bacteriol.">
        <title>The pangenome structure of Escherichia coli: comparative genomic analysis of E. coli commensal and pathogenic isolates.</title>
        <authorList>
            <person name="Rasko D.A."/>
            <person name="Rosovitz M.J."/>
            <person name="Myers G.S.A."/>
            <person name="Mongodin E.F."/>
            <person name="Fricke W.F."/>
            <person name="Gajer P."/>
            <person name="Crabtree J."/>
            <person name="Sebaihia M."/>
            <person name="Thomson N.R."/>
            <person name="Chaudhuri R."/>
            <person name="Henderson I.R."/>
            <person name="Sperandio V."/>
            <person name="Ravel J."/>
        </authorList>
    </citation>
    <scope>NUCLEOTIDE SEQUENCE [LARGE SCALE GENOMIC DNA]</scope>
    <source>
        <strain>HS</strain>
    </source>
</reference>
<proteinExistence type="inferred from homology"/>
<name>ULAG_ECOHS</name>
<dbReference type="EC" id="3.1.1.-" evidence="1"/>
<dbReference type="EMBL" id="CP000802">
    <property type="protein sequence ID" value="ABV08592.1"/>
    <property type="molecule type" value="Genomic_DNA"/>
</dbReference>
<dbReference type="RefSeq" id="WP_001295191.1">
    <property type="nucleotide sequence ID" value="NC_009800.1"/>
</dbReference>
<dbReference type="SMR" id="A8A7T8"/>
<dbReference type="GeneID" id="93777632"/>
<dbReference type="KEGG" id="ecx:EcHS_A4436"/>
<dbReference type="HOGENOM" id="CLU_074775_0_0_6"/>
<dbReference type="UniPathway" id="UPA00263">
    <property type="reaction ID" value="UER00377"/>
</dbReference>
<dbReference type="GO" id="GO:0005737">
    <property type="term" value="C:cytoplasm"/>
    <property type="evidence" value="ECO:0007669"/>
    <property type="project" value="UniProtKB-SubCell"/>
</dbReference>
<dbReference type="GO" id="GO:0035460">
    <property type="term" value="F:L-ascorbate 6-phosphate lactonase activity"/>
    <property type="evidence" value="ECO:0007669"/>
    <property type="project" value="InterPro"/>
</dbReference>
<dbReference type="GO" id="GO:0030145">
    <property type="term" value="F:manganese ion binding"/>
    <property type="evidence" value="ECO:0007669"/>
    <property type="project" value="InterPro"/>
</dbReference>
<dbReference type="GO" id="GO:0019854">
    <property type="term" value="P:L-ascorbic acid catabolic process"/>
    <property type="evidence" value="ECO:0007669"/>
    <property type="project" value="UniProtKB-UniRule"/>
</dbReference>
<dbReference type="CDD" id="cd16284">
    <property type="entry name" value="UlaG-like_MBL-fold"/>
    <property type="match status" value="1"/>
</dbReference>
<dbReference type="FunFam" id="3.60.15.10:FF:000004">
    <property type="entry name" value="Probable L-ascorbate-6-phosphate lactonase UlaG"/>
    <property type="match status" value="1"/>
</dbReference>
<dbReference type="Gene3D" id="3.60.15.10">
    <property type="entry name" value="Ribonuclease Z/Hydroxyacylglutathione hydrolase-like"/>
    <property type="match status" value="1"/>
</dbReference>
<dbReference type="HAMAP" id="MF_01266">
    <property type="entry name" value="UlaG"/>
    <property type="match status" value="1"/>
</dbReference>
<dbReference type="InterPro" id="IPR023951">
    <property type="entry name" value="L-ascorbate_6P_UlaG"/>
</dbReference>
<dbReference type="InterPro" id="IPR001279">
    <property type="entry name" value="Metallo-B-lactamas"/>
</dbReference>
<dbReference type="InterPro" id="IPR036866">
    <property type="entry name" value="RibonucZ/Hydroxyglut_hydro"/>
</dbReference>
<dbReference type="InterPro" id="IPR048021">
    <property type="entry name" value="UlaG-like_MBL-fold"/>
</dbReference>
<dbReference type="InterPro" id="IPR050114">
    <property type="entry name" value="UPF0173_UPF0282_UlaG_hydrolase"/>
</dbReference>
<dbReference type="NCBIfam" id="NF008688">
    <property type="entry name" value="PRK11709.1"/>
    <property type="match status" value="1"/>
</dbReference>
<dbReference type="PANTHER" id="PTHR43546:SF9">
    <property type="entry name" value="L-ASCORBATE-6-PHOSPHATE LACTONASE ULAG-RELATED"/>
    <property type="match status" value="1"/>
</dbReference>
<dbReference type="PANTHER" id="PTHR43546">
    <property type="entry name" value="UPF0173 METAL-DEPENDENT HYDROLASE MJ1163-RELATED"/>
    <property type="match status" value="1"/>
</dbReference>
<dbReference type="Pfam" id="PF12706">
    <property type="entry name" value="Lactamase_B_2"/>
    <property type="match status" value="1"/>
</dbReference>
<dbReference type="SUPFAM" id="SSF56281">
    <property type="entry name" value="Metallo-hydrolase/oxidoreductase"/>
    <property type="match status" value="1"/>
</dbReference>
<protein>
    <recommendedName>
        <fullName evidence="1">Probable L-ascorbate-6-phosphate lactonase UlaG</fullName>
        <ecNumber evidence="1">3.1.1.-</ecNumber>
    </recommendedName>
    <alternativeName>
        <fullName evidence="1">L-ascorbate utilization protein G</fullName>
    </alternativeName>
</protein>